<sequence>MAQYKGAASEAGRAMQLMKKREREREQLEQLKQKIAEDNMVKSNIDKKFSAHYDAVEQELKSSTVGLVTLNDMKAKQEALVKEREKQLAKKEQSKELQLKLEKQKEKKRKEEQKRKIASLSFNPDEGEDEEEEEEEEEEEEEDEIEEEICLPVKKKKLGKNPDVDTSFLPDRDREEEENRLREELRQEWERKQEKIKSEEIEITFSYWDGSGHRKTVKMKKGNTIQQFLQRALEVLRKDFSELRSAGVEHLMYIKEDLIIPHHHSFYDFIVTKARGKSGPLFNFDVHDDIRLVNDATVEKDESHAGKVVLRSWYEKNKHIFPASRWEPYDPEKKWDKYTIR</sequence>
<accession>Q568K9</accession>
<dbReference type="EMBL" id="BC092815">
    <property type="protein sequence ID" value="AAH92815.1"/>
    <property type="molecule type" value="mRNA"/>
</dbReference>
<dbReference type="RefSeq" id="NP_001017636.1">
    <property type="nucleotide sequence ID" value="NM_001017636.1"/>
</dbReference>
<dbReference type="SMR" id="Q568K9"/>
<dbReference type="BioGRID" id="95441">
    <property type="interactions" value="1"/>
</dbReference>
<dbReference type="FunCoup" id="Q568K9">
    <property type="interactions" value="1458"/>
</dbReference>
<dbReference type="STRING" id="7955.ENSDARP00000028381"/>
<dbReference type="PaxDb" id="7955-ENSDARP00000028381"/>
<dbReference type="GeneID" id="550329"/>
<dbReference type="KEGG" id="dre:550329"/>
<dbReference type="AGR" id="ZFIN:ZDB-GENE-050417-110"/>
<dbReference type="CTD" id="9130"/>
<dbReference type="ZFIN" id="ZDB-GENE-050417-110">
    <property type="gene designation" value="fam50a"/>
</dbReference>
<dbReference type="eggNOG" id="KOG2894">
    <property type="taxonomic scope" value="Eukaryota"/>
</dbReference>
<dbReference type="InParanoid" id="Q568K9"/>
<dbReference type="OrthoDB" id="1562195at2759"/>
<dbReference type="PhylomeDB" id="Q568K9"/>
<dbReference type="Reactome" id="R-DRE-72163">
    <property type="pathway name" value="mRNA Splicing - Major Pathway"/>
</dbReference>
<dbReference type="PRO" id="PR:Q568K9"/>
<dbReference type="Proteomes" id="UP000000437">
    <property type="component" value="Chromosome 23"/>
</dbReference>
<dbReference type="GO" id="GO:0005634">
    <property type="term" value="C:nucleus"/>
    <property type="evidence" value="ECO:0000318"/>
    <property type="project" value="GO_Central"/>
</dbReference>
<dbReference type="GO" id="GO:0007417">
    <property type="term" value="P:central nervous system development"/>
    <property type="evidence" value="ECO:0000315"/>
    <property type="project" value="ZFIN"/>
</dbReference>
<dbReference type="GO" id="GO:0006325">
    <property type="term" value="P:chromatin organization"/>
    <property type="evidence" value="ECO:0000318"/>
    <property type="project" value="GO_Central"/>
</dbReference>
<dbReference type="GO" id="GO:0048701">
    <property type="term" value="P:embryonic cranial skeleton morphogenesis"/>
    <property type="evidence" value="ECO:0000315"/>
    <property type="project" value="ZFIN"/>
</dbReference>
<dbReference type="GO" id="GO:0006397">
    <property type="term" value="P:mRNA processing"/>
    <property type="evidence" value="ECO:0007669"/>
    <property type="project" value="UniProtKB-KW"/>
</dbReference>
<dbReference type="GO" id="GO:0048024">
    <property type="term" value="P:regulation of mRNA splicing, via spliceosome"/>
    <property type="evidence" value="ECO:0000315"/>
    <property type="project" value="ZFIN"/>
</dbReference>
<dbReference type="GO" id="GO:0008380">
    <property type="term" value="P:RNA splicing"/>
    <property type="evidence" value="ECO:0007669"/>
    <property type="project" value="UniProtKB-KW"/>
</dbReference>
<dbReference type="InterPro" id="IPR048337">
    <property type="entry name" value="FAM50A/XAP5_C"/>
</dbReference>
<dbReference type="InterPro" id="IPR007005">
    <property type="entry name" value="XAP5"/>
</dbReference>
<dbReference type="PANTHER" id="PTHR12722:SF0">
    <property type="entry name" value="PROTEIN FAM50A"/>
    <property type="match status" value="1"/>
</dbReference>
<dbReference type="PANTHER" id="PTHR12722">
    <property type="entry name" value="XAP-5 PROTEIN-RELATED"/>
    <property type="match status" value="1"/>
</dbReference>
<dbReference type="Pfam" id="PF04921">
    <property type="entry name" value="XAP5"/>
    <property type="match status" value="1"/>
</dbReference>
<name>FA50A_DANRE</name>
<protein>
    <recommendedName>
        <fullName>Protein FAM50A</fullName>
    </recommendedName>
</protein>
<keyword id="KW-0507">mRNA processing</keyword>
<keyword id="KW-0508">mRNA splicing</keyword>
<keyword id="KW-0539">Nucleus</keyword>
<keyword id="KW-1185">Reference proteome</keyword>
<feature type="chain" id="PRO_0000326508" description="Protein FAM50A">
    <location>
        <begin position="1"/>
        <end position="341"/>
    </location>
</feature>
<feature type="region of interest" description="Disordered" evidence="2">
    <location>
        <begin position="1"/>
        <end position="27"/>
    </location>
</feature>
<feature type="region of interest" description="Disordered" evidence="2">
    <location>
        <begin position="80"/>
        <end position="147"/>
    </location>
</feature>
<feature type="compositionally biased region" description="Basic and acidic residues" evidence="2">
    <location>
        <begin position="80"/>
        <end position="115"/>
    </location>
</feature>
<feature type="compositionally biased region" description="Acidic residues" evidence="2">
    <location>
        <begin position="125"/>
        <end position="147"/>
    </location>
</feature>
<reference key="1">
    <citation type="submission" date="2005-04" db="EMBL/GenBank/DDBJ databases">
        <authorList>
            <consortium name="NIH - Zebrafish Gene Collection (ZGC) project"/>
        </authorList>
    </citation>
    <scope>NUCLEOTIDE SEQUENCE [LARGE SCALE MRNA]</scope>
    <source>
        <tissue>Ovary</tissue>
    </source>
</reference>
<reference key="2">
    <citation type="journal article" date="2020" name="Nat. Commun.">
        <title>Mutations in FAM50A suggest that Armfield XLID syndrome is a spliceosomopathy.</title>
        <authorList>
            <person name="Lee Y.R."/>
            <person name="Khan K."/>
            <person name="Armfield-Uhas K."/>
            <person name="Srikanth S."/>
            <person name="Thompson N.A."/>
            <person name="Pardo M."/>
            <person name="Yu L."/>
            <person name="Norris J.W."/>
            <person name="Peng Y."/>
            <person name="Gripp K.W."/>
            <person name="Aleck K.A."/>
            <person name="Li C."/>
            <person name="Spence E."/>
            <person name="Choi T.I."/>
            <person name="Kwon S.J."/>
            <person name="Park H.M."/>
            <person name="Yu D."/>
            <person name="Do Heo W."/>
            <person name="Mooney M.R."/>
            <person name="Baig S.M."/>
            <person name="Wentzensen I.M."/>
            <person name="Telegrafi A."/>
            <person name="McWalter K."/>
            <person name="Moreland T."/>
            <person name="Roadhouse C."/>
            <person name="Ramsey K."/>
            <person name="Lyons M.J."/>
            <person name="Skinner C."/>
            <person name="Alexov E."/>
            <person name="Katsanis N."/>
            <person name="Stevenson R.E."/>
            <person name="Choudhary J.S."/>
            <person name="Adams D.J."/>
            <person name="Kim C.H."/>
            <person name="Davis E.E."/>
            <person name="Schwartz C.E."/>
        </authorList>
    </citation>
    <scope>FUNCTION</scope>
    <scope>DEVELOPMENTAL STAGE</scope>
    <scope>DISRUPTION PHENOTYPE</scope>
</reference>
<comment type="function">
    <text evidence="3">Probably involved in the regulation of pre-mRNA splicing.</text>
</comment>
<comment type="subcellular location">
    <subcellularLocation>
        <location evidence="1">Nucleus</location>
    </subcellularLocation>
</comment>
<comment type="developmental stage">
    <text evidence="3">Widely expressed prior to and throughout gastrulation, and in mid-somitic embryos. From 24 hours post-fertilization (hpf) onward, and up to the latest time point assessed (72 hpf), expression is detected in anterior structures including the brain, eye and mandible.</text>
</comment>
<comment type="disruption phenotype">
    <text evidence="3">Fam50a depletion results in early neurogenesis defects, abnormal anterior development impacting the brain, eyes and cartilage apparent at day 5 post-fertilization (5 dpf), and lethality occurring by 6 dpf.</text>
</comment>
<comment type="similarity">
    <text evidence="4">Belongs to the FAM50 family.</text>
</comment>
<proteinExistence type="evidence at transcript level"/>
<gene>
    <name type="primary">fam50a</name>
</gene>
<organism>
    <name type="scientific">Danio rerio</name>
    <name type="common">Zebrafish</name>
    <name type="synonym">Brachydanio rerio</name>
    <dbReference type="NCBI Taxonomy" id="7955"/>
    <lineage>
        <taxon>Eukaryota</taxon>
        <taxon>Metazoa</taxon>
        <taxon>Chordata</taxon>
        <taxon>Craniata</taxon>
        <taxon>Vertebrata</taxon>
        <taxon>Euteleostomi</taxon>
        <taxon>Actinopterygii</taxon>
        <taxon>Neopterygii</taxon>
        <taxon>Teleostei</taxon>
        <taxon>Ostariophysi</taxon>
        <taxon>Cypriniformes</taxon>
        <taxon>Danionidae</taxon>
        <taxon>Danioninae</taxon>
        <taxon>Danio</taxon>
    </lineage>
</organism>
<evidence type="ECO:0000250" key="1">
    <source>
        <dbReference type="UniProtKB" id="Q14320"/>
    </source>
</evidence>
<evidence type="ECO:0000256" key="2">
    <source>
        <dbReference type="SAM" id="MobiDB-lite"/>
    </source>
</evidence>
<evidence type="ECO:0000269" key="3">
    <source>
    </source>
</evidence>
<evidence type="ECO:0000305" key="4"/>